<gene>
    <name evidence="1" type="primary">ilvD</name>
    <name type="ordered locus">HCH_05854</name>
</gene>
<accession>Q2SA20</accession>
<dbReference type="EC" id="4.2.1.9" evidence="1"/>
<dbReference type="EMBL" id="CP000155">
    <property type="protein sequence ID" value="ABC32504.1"/>
    <property type="molecule type" value="Genomic_DNA"/>
</dbReference>
<dbReference type="RefSeq" id="WP_011399563.1">
    <property type="nucleotide sequence ID" value="NC_007645.1"/>
</dbReference>
<dbReference type="SMR" id="Q2SA20"/>
<dbReference type="STRING" id="349521.HCH_05854"/>
<dbReference type="KEGG" id="hch:HCH_05854"/>
<dbReference type="eggNOG" id="COG0129">
    <property type="taxonomic scope" value="Bacteria"/>
</dbReference>
<dbReference type="HOGENOM" id="CLU_014271_4_2_6"/>
<dbReference type="OrthoDB" id="9807077at2"/>
<dbReference type="UniPathway" id="UPA00047">
    <property type="reaction ID" value="UER00057"/>
</dbReference>
<dbReference type="UniPathway" id="UPA00049">
    <property type="reaction ID" value="UER00061"/>
</dbReference>
<dbReference type="Proteomes" id="UP000000238">
    <property type="component" value="Chromosome"/>
</dbReference>
<dbReference type="GO" id="GO:0005829">
    <property type="term" value="C:cytosol"/>
    <property type="evidence" value="ECO:0007669"/>
    <property type="project" value="TreeGrafter"/>
</dbReference>
<dbReference type="GO" id="GO:0051537">
    <property type="term" value="F:2 iron, 2 sulfur cluster binding"/>
    <property type="evidence" value="ECO:0007669"/>
    <property type="project" value="UniProtKB-UniRule"/>
</dbReference>
<dbReference type="GO" id="GO:0004160">
    <property type="term" value="F:dihydroxy-acid dehydratase activity"/>
    <property type="evidence" value="ECO:0007669"/>
    <property type="project" value="UniProtKB-UniRule"/>
</dbReference>
<dbReference type="GO" id="GO:0000287">
    <property type="term" value="F:magnesium ion binding"/>
    <property type="evidence" value="ECO:0007669"/>
    <property type="project" value="UniProtKB-UniRule"/>
</dbReference>
<dbReference type="GO" id="GO:0009097">
    <property type="term" value="P:isoleucine biosynthetic process"/>
    <property type="evidence" value="ECO:0007669"/>
    <property type="project" value="UniProtKB-UniRule"/>
</dbReference>
<dbReference type="GO" id="GO:0009099">
    <property type="term" value="P:L-valine biosynthetic process"/>
    <property type="evidence" value="ECO:0007669"/>
    <property type="project" value="UniProtKB-UniRule"/>
</dbReference>
<dbReference type="FunFam" id="3.50.30.80:FF:000001">
    <property type="entry name" value="Dihydroxy-acid dehydratase"/>
    <property type="match status" value="1"/>
</dbReference>
<dbReference type="Gene3D" id="3.50.30.80">
    <property type="entry name" value="IlvD/EDD C-terminal domain-like"/>
    <property type="match status" value="1"/>
</dbReference>
<dbReference type="HAMAP" id="MF_00012">
    <property type="entry name" value="IlvD"/>
    <property type="match status" value="1"/>
</dbReference>
<dbReference type="InterPro" id="IPR042096">
    <property type="entry name" value="Dihydro-acid_dehy_C"/>
</dbReference>
<dbReference type="InterPro" id="IPR004404">
    <property type="entry name" value="DihydroxyA_deHydtase"/>
</dbReference>
<dbReference type="InterPro" id="IPR020558">
    <property type="entry name" value="DiOHA_6PGluconate_deHydtase_CS"/>
</dbReference>
<dbReference type="InterPro" id="IPR056740">
    <property type="entry name" value="ILV_EDD_C"/>
</dbReference>
<dbReference type="InterPro" id="IPR000581">
    <property type="entry name" value="ILV_EDD_N"/>
</dbReference>
<dbReference type="InterPro" id="IPR037237">
    <property type="entry name" value="IlvD/EDD_N"/>
</dbReference>
<dbReference type="NCBIfam" id="TIGR00110">
    <property type="entry name" value="ilvD"/>
    <property type="match status" value="1"/>
</dbReference>
<dbReference type="NCBIfam" id="NF009103">
    <property type="entry name" value="PRK12448.1"/>
    <property type="match status" value="1"/>
</dbReference>
<dbReference type="PANTHER" id="PTHR43661">
    <property type="entry name" value="D-XYLONATE DEHYDRATASE"/>
    <property type="match status" value="1"/>
</dbReference>
<dbReference type="PANTHER" id="PTHR43661:SF3">
    <property type="entry name" value="D-XYLONATE DEHYDRATASE YAGF-RELATED"/>
    <property type="match status" value="1"/>
</dbReference>
<dbReference type="Pfam" id="PF24877">
    <property type="entry name" value="ILV_EDD_C"/>
    <property type="match status" value="1"/>
</dbReference>
<dbReference type="Pfam" id="PF00920">
    <property type="entry name" value="ILVD_EDD_N"/>
    <property type="match status" value="1"/>
</dbReference>
<dbReference type="SUPFAM" id="SSF143975">
    <property type="entry name" value="IlvD/EDD N-terminal domain-like"/>
    <property type="match status" value="1"/>
</dbReference>
<dbReference type="SUPFAM" id="SSF52016">
    <property type="entry name" value="LeuD/IlvD-like"/>
    <property type="match status" value="1"/>
</dbReference>
<dbReference type="PROSITE" id="PS00886">
    <property type="entry name" value="ILVD_EDD_1"/>
    <property type="match status" value="1"/>
</dbReference>
<dbReference type="PROSITE" id="PS00887">
    <property type="entry name" value="ILVD_EDD_2"/>
    <property type="match status" value="1"/>
</dbReference>
<organism>
    <name type="scientific">Hahella chejuensis (strain KCTC 2396)</name>
    <dbReference type="NCBI Taxonomy" id="349521"/>
    <lineage>
        <taxon>Bacteria</taxon>
        <taxon>Pseudomonadati</taxon>
        <taxon>Pseudomonadota</taxon>
        <taxon>Gammaproteobacteria</taxon>
        <taxon>Oceanospirillales</taxon>
        <taxon>Hahellaceae</taxon>
        <taxon>Hahella</taxon>
    </lineage>
</organism>
<comment type="function">
    <text evidence="1">Functions in the biosynthesis of branched-chain amino acids. Catalyzes the dehydration of (2R,3R)-2,3-dihydroxy-3-methylpentanoate (2,3-dihydroxy-3-methylvalerate) into 2-oxo-3-methylpentanoate (2-oxo-3-methylvalerate) and of (2R)-2,3-dihydroxy-3-methylbutanoate (2,3-dihydroxyisovalerate) into 2-oxo-3-methylbutanoate (2-oxoisovalerate), the penultimate precursor to L-isoleucine and L-valine, respectively.</text>
</comment>
<comment type="catalytic activity">
    <reaction evidence="1">
        <text>(2R)-2,3-dihydroxy-3-methylbutanoate = 3-methyl-2-oxobutanoate + H2O</text>
        <dbReference type="Rhea" id="RHEA:24809"/>
        <dbReference type="ChEBI" id="CHEBI:11851"/>
        <dbReference type="ChEBI" id="CHEBI:15377"/>
        <dbReference type="ChEBI" id="CHEBI:49072"/>
        <dbReference type="EC" id="4.2.1.9"/>
    </reaction>
    <physiologicalReaction direction="left-to-right" evidence="1">
        <dbReference type="Rhea" id="RHEA:24810"/>
    </physiologicalReaction>
</comment>
<comment type="catalytic activity">
    <reaction evidence="1">
        <text>(2R,3R)-2,3-dihydroxy-3-methylpentanoate = (S)-3-methyl-2-oxopentanoate + H2O</text>
        <dbReference type="Rhea" id="RHEA:27694"/>
        <dbReference type="ChEBI" id="CHEBI:15377"/>
        <dbReference type="ChEBI" id="CHEBI:35146"/>
        <dbReference type="ChEBI" id="CHEBI:49258"/>
        <dbReference type="EC" id="4.2.1.9"/>
    </reaction>
    <physiologicalReaction direction="left-to-right" evidence="1">
        <dbReference type="Rhea" id="RHEA:27695"/>
    </physiologicalReaction>
</comment>
<comment type="cofactor">
    <cofactor evidence="1">
        <name>[2Fe-2S] cluster</name>
        <dbReference type="ChEBI" id="CHEBI:190135"/>
    </cofactor>
    <text evidence="1">Binds 1 [2Fe-2S] cluster per subunit. This cluster acts as a Lewis acid cofactor.</text>
</comment>
<comment type="cofactor">
    <cofactor evidence="1">
        <name>Mg(2+)</name>
        <dbReference type="ChEBI" id="CHEBI:18420"/>
    </cofactor>
</comment>
<comment type="pathway">
    <text evidence="1">Amino-acid biosynthesis; L-isoleucine biosynthesis; L-isoleucine from 2-oxobutanoate: step 3/4.</text>
</comment>
<comment type="pathway">
    <text evidence="1">Amino-acid biosynthesis; L-valine biosynthesis; L-valine from pyruvate: step 3/4.</text>
</comment>
<comment type="subunit">
    <text evidence="1">Homodimer.</text>
</comment>
<comment type="similarity">
    <text evidence="1">Belongs to the IlvD/Edd family.</text>
</comment>
<protein>
    <recommendedName>
        <fullName evidence="1">Dihydroxy-acid dehydratase</fullName>
        <shortName evidence="1">DAD</shortName>
        <ecNumber evidence="1">4.2.1.9</ecNumber>
    </recommendedName>
</protein>
<name>ILVD_HAHCH</name>
<keyword id="KW-0001">2Fe-2S</keyword>
<keyword id="KW-0028">Amino-acid biosynthesis</keyword>
<keyword id="KW-0100">Branched-chain amino acid biosynthesis</keyword>
<keyword id="KW-0408">Iron</keyword>
<keyword id="KW-0411">Iron-sulfur</keyword>
<keyword id="KW-0456">Lyase</keyword>
<keyword id="KW-0460">Magnesium</keyword>
<keyword id="KW-0479">Metal-binding</keyword>
<keyword id="KW-1185">Reference proteome</keyword>
<feature type="chain" id="PRO_1000000990" description="Dihydroxy-acid dehydratase">
    <location>
        <begin position="1"/>
        <end position="614"/>
    </location>
</feature>
<feature type="active site" description="Proton acceptor" evidence="1">
    <location>
        <position position="515"/>
    </location>
</feature>
<feature type="binding site" evidence="1">
    <location>
        <position position="81"/>
    </location>
    <ligand>
        <name>Mg(2+)</name>
        <dbReference type="ChEBI" id="CHEBI:18420"/>
    </ligand>
</feature>
<feature type="binding site" evidence="1">
    <location>
        <position position="122"/>
    </location>
    <ligand>
        <name>[2Fe-2S] cluster</name>
        <dbReference type="ChEBI" id="CHEBI:190135"/>
    </ligand>
</feature>
<feature type="binding site" evidence="1">
    <location>
        <position position="123"/>
    </location>
    <ligand>
        <name>Mg(2+)</name>
        <dbReference type="ChEBI" id="CHEBI:18420"/>
    </ligand>
</feature>
<feature type="binding site" description="via carbamate group" evidence="1">
    <location>
        <position position="124"/>
    </location>
    <ligand>
        <name>Mg(2+)</name>
        <dbReference type="ChEBI" id="CHEBI:18420"/>
    </ligand>
</feature>
<feature type="binding site" evidence="1">
    <location>
        <position position="193"/>
    </location>
    <ligand>
        <name>[2Fe-2S] cluster</name>
        <dbReference type="ChEBI" id="CHEBI:190135"/>
    </ligand>
</feature>
<feature type="binding site" evidence="1">
    <location>
        <position position="489"/>
    </location>
    <ligand>
        <name>Mg(2+)</name>
        <dbReference type="ChEBI" id="CHEBI:18420"/>
    </ligand>
</feature>
<feature type="modified residue" description="N6-carboxylysine" evidence="1">
    <location>
        <position position="124"/>
    </location>
</feature>
<sequence>MPEYRSSTTTKGRNMAGARALWRATGMKTEDFSKPIIAVVNSFTQFVPGHVHLKDLGQLVCREIEAAGGVAKEFNTIAVDDGIAMGHDGMLYSLPSREIIADSVEYMANAHCADALVCISNCDKITPGMLMAALRLNIPAIFVSGGPMEAGKTKLSEHKLDLVDAMVIAADSSASDELTEEYERSACPTCGSCSGMFTANSMNCLTEAIGLSLPGNGTTLATHSDREQLFLTAARRIVDLTKRYYQDEDTSVLPRSIASFKAFENAMTLDIAMGGSTNTILHLLAAAQEAEVDFSMTHIDHLSRKVGQFCKVAPNTPKYHIEDVHRAGGIMAILGELDRAGLLHTDVPTVHSDTMKDALDAWDVMRNNDPELHKFFKAGPAGIPTQQAFSQSTRWSSLDLDRENGCIRSAEHAFSKEGGLAVLYGNIAEDGCIVKTAGVDESILLFKGKARIFESQDDAVKGILNDQVKEGDVVIIRYEGPKGGPGMQEMLYPTSYLKSKGLGKACALLTDGRFSGGTSGLSIGHCSPEAAAGGAIGLIEEGDEIIIDIPNRGINVSLTPEQLKARRQAMEAKGADAWKPAQPRPRKVTTALKAYALLATSADKGAVRDKELLK</sequence>
<evidence type="ECO:0000255" key="1">
    <source>
        <dbReference type="HAMAP-Rule" id="MF_00012"/>
    </source>
</evidence>
<proteinExistence type="inferred from homology"/>
<reference key="1">
    <citation type="journal article" date="2005" name="Nucleic Acids Res.">
        <title>Genomic blueprint of Hahella chejuensis, a marine microbe producing an algicidal agent.</title>
        <authorList>
            <person name="Jeong H."/>
            <person name="Yim J.H."/>
            <person name="Lee C."/>
            <person name="Choi S.-H."/>
            <person name="Park Y.K."/>
            <person name="Yoon S.H."/>
            <person name="Hur C.-G."/>
            <person name="Kang H.-Y."/>
            <person name="Kim D."/>
            <person name="Lee H.H."/>
            <person name="Park K.H."/>
            <person name="Park S.-H."/>
            <person name="Park H.-S."/>
            <person name="Lee H.K."/>
            <person name="Oh T.K."/>
            <person name="Kim J.F."/>
        </authorList>
    </citation>
    <scope>NUCLEOTIDE SEQUENCE [LARGE SCALE GENOMIC DNA]</scope>
    <source>
        <strain>KCTC 2396</strain>
    </source>
</reference>